<accession>Q6P050</accession>
<protein>
    <recommendedName>
        <fullName>F-box and leucine-rich protein 22</fullName>
    </recommendedName>
</protein>
<comment type="function">
    <text evidence="2">Substrate-recognition component of the SCF (SKP1-CUL1-F-box protein)-type E3 ubiquitin ligase complex. Promotes ubiquitination of sarcomeric proteins alpha-actinin-2 (ACTN2) and filamin-C (FLNC).</text>
</comment>
<comment type="pathway">
    <text>Protein modification; protein ubiquitination.</text>
</comment>
<comment type="subunit">
    <text evidence="2">Directly interacts with SKP1 and CUL1.</text>
</comment>
<comment type="interaction">
    <interactant intactId="EBI-24224082">
        <id>Q6P050</id>
    </interactant>
    <interactant intactId="EBI-77797">
        <id>P35609</id>
        <label>ACTN2</label>
    </interactant>
    <organismsDiffer>false</organismsDiffer>
    <experiments>3</experiments>
</comment>
<comment type="interaction">
    <interactant intactId="EBI-24224082">
        <id>Q6P050</id>
    </interactant>
    <interactant intactId="EBI-489954">
        <id>Q14315</id>
        <label>FLNC</label>
    </interactant>
    <organismsDiffer>false</organismsDiffer>
    <experiments>3</experiments>
</comment>
<comment type="interaction">
    <interactant intactId="EBI-24224082">
        <id>Q6P050</id>
    </interactant>
    <interactant intactId="EBI-307486">
        <id>P63208</id>
        <label>SKP1</label>
    </interactant>
    <organismsDiffer>false</organismsDiffer>
    <experiments>7</experiments>
</comment>
<comment type="subcellular location">
    <subcellularLocation>
        <location evidence="2">Cytoplasm</location>
        <location evidence="2">Myofibril</location>
        <location evidence="2">Sarcomere</location>
        <location evidence="2">Z line</location>
    </subcellularLocation>
</comment>
<comment type="tissue specificity">
    <text evidence="2">Enriched in cardiac muscle.</text>
</comment>
<comment type="caution">
    <text evidence="3">It is uncertain whether Met-1 or Met-7 is the initiator.</text>
</comment>
<comment type="sequence caution" evidence="3">
    <conflict type="erroneous initiation">
        <sequence resource="EMBL-CDS" id="AAH65833"/>
    </conflict>
    <text>Truncated N-terminus.</text>
</comment>
<proteinExistence type="evidence at protein level"/>
<name>FXL22_HUMAN</name>
<sequence>MWPLLTMHITQLNRECLLHLFSFLDKDSRKSLARTCSQLHDVFEDPALWSLLHFRSLTELQKDNFLLGPALRSLSICWHSSRVQVCSIEDWLKSAFQRSICSRHESLVNDFLLRVCDRLSAVRSPRRREAPAPSSGTPIAVGPKSPRWGGPDHSEFADLRSGVTGARAAARRGLGSLRAERPSETPPAPGVSWGPPPPGAPVVISVKQEEGKQGRTGRRSHRAAPPCGFARTRVCPPTFPGADAFPQ</sequence>
<feature type="chain" id="PRO_0000247149" description="F-box and leucine-rich protein 22">
    <location>
        <begin position="1"/>
        <end position="247"/>
    </location>
</feature>
<feature type="domain" description="F-box">
    <location>
        <begin position="6"/>
        <end position="52"/>
    </location>
</feature>
<feature type="region of interest" description="Disordered" evidence="1">
    <location>
        <begin position="124"/>
        <end position="154"/>
    </location>
</feature>
<feature type="region of interest" description="Disordered" evidence="1">
    <location>
        <begin position="173"/>
        <end position="247"/>
    </location>
</feature>
<feature type="compositionally biased region" description="Pro residues" evidence="1">
    <location>
        <begin position="184"/>
        <end position="200"/>
    </location>
</feature>
<feature type="sequence variant" id="VAR_033940" description="In dbSNP:rs8035931.">
    <original>V</original>
    <variation>L</variation>
    <location>
        <position position="115"/>
    </location>
</feature>
<evidence type="ECO:0000256" key="1">
    <source>
        <dbReference type="SAM" id="MobiDB-lite"/>
    </source>
</evidence>
<evidence type="ECO:0000269" key="2">
    <source>
    </source>
</evidence>
<evidence type="ECO:0000305" key="3"/>
<keyword id="KW-0963">Cytoplasm</keyword>
<keyword id="KW-1267">Proteomics identification</keyword>
<keyword id="KW-1185">Reference proteome</keyword>
<keyword id="KW-0833">Ubl conjugation pathway</keyword>
<reference key="1">
    <citation type="journal article" date="2006" name="Nature">
        <title>Analysis of the DNA sequence and duplication history of human chromosome 15.</title>
        <authorList>
            <person name="Zody M.C."/>
            <person name="Garber M."/>
            <person name="Sharpe T."/>
            <person name="Young S.K."/>
            <person name="Rowen L."/>
            <person name="O'Neill K."/>
            <person name="Whittaker C.A."/>
            <person name="Kamal M."/>
            <person name="Chang J.L."/>
            <person name="Cuomo C.A."/>
            <person name="Dewar K."/>
            <person name="FitzGerald M.G."/>
            <person name="Kodira C.D."/>
            <person name="Madan A."/>
            <person name="Qin S."/>
            <person name="Yang X."/>
            <person name="Abbasi N."/>
            <person name="Abouelleil A."/>
            <person name="Arachchi H.M."/>
            <person name="Baradarani L."/>
            <person name="Birditt B."/>
            <person name="Bloom S."/>
            <person name="Bloom T."/>
            <person name="Borowsky M.L."/>
            <person name="Burke J."/>
            <person name="Butler J."/>
            <person name="Cook A."/>
            <person name="DeArellano K."/>
            <person name="DeCaprio D."/>
            <person name="Dorris L. III"/>
            <person name="Dors M."/>
            <person name="Eichler E.E."/>
            <person name="Engels R."/>
            <person name="Fahey J."/>
            <person name="Fleetwood P."/>
            <person name="Friedman C."/>
            <person name="Gearin G."/>
            <person name="Hall J.L."/>
            <person name="Hensley G."/>
            <person name="Johnson E."/>
            <person name="Jones C."/>
            <person name="Kamat A."/>
            <person name="Kaur A."/>
            <person name="Locke D.P."/>
            <person name="Madan A."/>
            <person name="Munson G."/>
            <person name="Jaffe D.B."/>
            <person name="Lui A."/>
            <person name="Macdonald P."/>
            <person name="Mauceli E."/>
            <person name="Naylor J.W."/>
            <person name="Nesbitt R."/>
            <person name="Nicol R."/>
            <person name="O'Leary S.B."/>
            <person name="Ratcliffe A."/>
            <person name="Rounsley S."/>
            <person name="She X."/>
            <person name="Sneddon K.M.B."/>
            <person name="Stewart S."/>
            <person name="Sougnez C."/>
            <person name="Stone S.M."/>
            <person name="Topham K."/>
            <person name="Vincent D."/>
            <person name="Wang S."/>
            <person name="Zimmer A.R."/>
            <person name="Birren B.W."/>
            <person name="Hood L."/>
            <person name="Lander E.S."/>
            <person name="Nusbaum C."/>
        </authorList>
    </citation>
    <scope>NUCLEOTIDE SEQUENCE [LARGE SCALE GENOMIC DNA]</scope>
</reference>
<reference key="2">
    <citation type="journal article" date="2004" name="Genome Res.">
        <title>The status, quality, and expansion of the NIH full-length cDNA project: the Mammalian Gene Collection (MGC).</title>
        <authorList>
            <consortium name="The MGC Project Team"/>
        </authorList>
    </citation>
    <scope>NUCLEOTIDE SEQUENCE [LARGE SCALE MRNA]</scope>
    <source>
        <tissue>Testis</tissue>
    </source>
</reference>
<reference key="3">
    <citation type="journal article" date="2004" name="Genes Dev.">
        <title>Systematic analysis and nomenclature of mammalian F-box proteins.</title>
        <authorList>
            <person name="Jin J."/>
            <person name="Cardozo T."/>
            <person name="Lovering R.C."/>
            <person name="Elledge S.J."/>
            <person name="Pagano M."/>
            <person name="Harper J.W."/>
        </authorList>
    </citation>
    <scope>NOMENCLATURE</scope>
</reference>
<reference key="4">
    <citation type="journal article" date="2012" name="Circ. Res.">
        <title>F-box and leucine-rich repeat protein 22 is a cardiac-enriched F-box protein that regulates sarcomeric protein turnover and is essential for maintenance of contractile function in vivo.</title>
        <authorList>
            <person name="Spaich S."/>
            <person name="Will R.D."/>
            <person name="Just S."/>
            <person name="Spaich S."/>
            <person name="Kuhn C."/>
            <person name="Frank D."/>
            <person name="Berger I.M."/>
            <person name="Wiemann S."/>
            <person name="Korn B."/>
            <person name="Koegl M."/>
            <person name="Backs J."/>
            <person name="Katus H.A."/>
            <person name="Rottbauer W."/>
            <person name="Frey N."/>
        </authorList>
    </citation>
    <scope>FUNCTION</scope>
    <scope>SUBCELLULAR LOCATION</scope>
    <scope>TISSUE SPECIFICITY</scope>
    <scope>SUBUNIT</scope>
</reference>
<gene>
    <name type="primary">FBXL22</name>
</gene>
<organism>
    <name type="scientific">Homo sapiens</name>
    <name type="common">Human</name>
    <dbReference type="NCBI Taxonomy" id="9606"/>
    <lineage>
        <taxon>Eukaryota</taxon>
        <taxon>Metazoa</taxon>
        <taxon>Chordata</taxon>
        <taxon>Craniata</taxon>
        <taxon>Vertebrata</taxon>
        <taxon>Euteleostomi</taxon>
        <taxon>Mammalia</taxon>
        <taxon>Eutheria</taxon>
        <taxon>Euarchontoglires</taxon>
        <taxon>Primates</taxon>
        <taxon>Haplorrhini</taxon>
        <taxon>Catarrhini</taxon>
        <taxon>Hominidae</taxon>
        <taxon>Homo</taxon>
    </lineage>
</organism>
<dbReference type="EMBL" id="AC118274">
    <property type="status" value="NOT_ANNOTATED_CDS"/>
    <property type="molecule type" value="Genomic_DNA"/>
</dbReference>
<dbReference type="EMBL" id="BC065833">
    <property type="protein sequence ID" value="AAH65833.1"/>
    <property type="status" value="ALT_INIT"/>
    <property type="molecule type" value="mRNA"/>
</dbReference>
<dbReference type="CCDS" id="CCDS10187.2"/>
<dbReference type="RefSeq" id="NP_976307.2">
    <property type="nucleotide sequence ID" value="NM_203373.3"/>
</dbReference>
<dbReference type="BioGRID" id="129675">
    <property type="interactions" value="16"/>
</dbReference>
<dbReference type="ComplexPortal" id="CPX-2489">
    <property type="entry name" value="SCF E3 ubiquitin ligase complex, FBXL22 variant"/>
</dbReference>
<dbReference type="FunCoup" id="Q6P050">
    <property type="interactions" value="8"/>
</dbReference>
<dbReference type="IntAct" id="Q6P050">
    <property type="interactions" value="12"/>
</dbReference>
<dbReference type="STRING" id="9606.ENSP00000353794"/>
<dbReference type="GlyGen" id="Q6P050">
    <property type="glycosylation" value="2 sites, 1 O-linked glycan (2 sites)"/>
</dbReference>
<dbReference type="iPTMnet" id="Q6P050"/>
<dbReference type="BioMuta" id="FBXL22"/>
<dbReference type="DMDM" id="519668655"/>
<dbReference type="MassIVE" id="Q6P050"/>
<dbReference type="PaxDb" id="9606-ENSP00000353794"/>
<dbReference type="PeptideAtlas" id="Q6P050"/>
<dbReference type="ProteomicsDB" id="66802"/>
<dbReference type="Antibodypedia" id="25713">
    <property type="antibodies" value="55 antibodies from 12 providers"/>
</dbReference>
<dbReference type="DNASU" id="283807"/>
<dbReference type="Ensembl" id="ENST00000360587.2">
    <property type="protein sequence ID" value="ENSP00000353794.3"/>
    <property type="gene ID" value="ENSG00000197361.8"/>
</dbReference>
<dbReference type="GeneID" id="283807"/>
<dbReference type="KEGG" id="hsa:283807"/>
<dbReference type="UCSC" id="uc002amn.5">
    <property type="organism name" value="human"/>
</dbReference>
<dbReference type="AGR" id="HGNC:27537"/>
<dbReference type="CTD" id="283807"/>
<dbReference type="DisGeNET" id="283807"/>
<dbReference type="GeneCards" id="FBXL22"/>
<dbReference type="HGNC" id="HGNC:27537">
    <property type="gene designation" value="FBXL22"/>
</dbReference>
<dbReference type="HPA" id="ENSG00000197361">
    <property type="expression patterns" value="Tissue enhanced (endometrium, intestine)"/>
</dbReference>
<dbReference type="MIM" id="609088">
    <property type="type" value="gene"/>
</dbReference>
<dbReference type="neXtProt" id="NX_Q6P050"/>
<dbReference type="OpenTargets" id="ENSG00000197361"/>
<dbReference type="PharmGKB" id="PA134959373"/>
<dbReference type="VEuPathDB" id="HostDB:ENSG00000197361"/>
<dbReference type="eggNOG" id="KOG1947">
    <property type="taxonomic scope" value="Eukaryota"/>
</dbReference>
<dbReference type="GeneTree" id="ENSGT00390000003748"/>
<dbReference type="HOGENOM" id="CLU_100261_0_0_1"/>
<dbReference type="InParanoid" id="Q6P050"/>
<dbReference type="OrthoDB" id="549243at2759"/>
<dbReference type="PAN-GO" id="Q6P050">
    <property type="GO annotations" value="7 GO annotations based on evolutionary models"/>
</dbReference>
<dbReference type="PhylomeDB" id="Q6P050"/>
<dbReference type="TreeFam" id="TF332457"/>
<dbReference type="PathwayCommons" id="Q6P050"/>
<dbReference type="Reactome" id="R-HSA-8951664">
    <property type="pathway name" value="Neddylation"/>
</dbReference>
<dbReference type="Reactome" id="R-HSA-983168">
    <property type="pathway name" value="Antigen processing: Ubiquitination &amp; Proteasome degradation"/>
</dbReference>
<dbReference type="SignaLink" id="Q6P050"/>
<dbReference type="UniPathway" id="UPA00143"/>
<dbReference type="BioGRID-ORCS" id="283807">
    <property type="hits" value="5 hits in 1173 CRISPR screens"/>
</dbReference>
<dbReference type="GenomeRNAi" id="283807"/>
<dbReference type="Pharos" id="Q6P050">
    <property type="development level" value="Tdark"/>
</dbReference>
<dbReference type="PRO" id="PR:Q6P050"/>
<dbReference type="Proteomes" id="UP000005640">
    <property type="component" value="Chromosome 15"/>
</dbReference>
<dbReference type="RNAct" id="Q6P050">
    <property type="molecule type" value="protein"/>
</dbReference>
<dbReference type="Bgee" id="ENSG00000197361">
    <property type="expression patterns" value="Expressed in muscle layer of sigmoid colon and 100 other cell types or tissues"/>
</dbReference>
<dbReference type="ExpressionAtlas" id="Q6P050">
    <property type="expression patterns" value="baseline and differential"/>
</dbReference>
<dbReference type="GO" id="GO:0005829">
    <property type="term" value="C:cytosol"/>
    <property type="evidence" value="ECO:0000314"/>
    <property type="project" value="HPA"/>
</dbReference>
<dbReference type="GO" id="GO:0005730">
    <property type="term" value="C:nucleolus"/>
    <property type="evidence" value="ECO:0000314"/>
    <property type="project" value="HPA"/>
</dbReference>
<dbReference type="GO" id="GO:0030018">
    <property type="term" value="C:Z disc"/>
    <property type="evidence" value="ECO:0007669"/>
    <property type="project" value="UniProtKB-SubCell"/>
</dbReference>
<dbReference type="GO" id="GO:0061630">
    <property type="term" value="F:ubiquitin protein ligase activity"/>
    <property type="evidence" value="ECO:0000314"/>
    <property type="project" value="MGI"/>
</dbReference>
<dbReference type="GO" id="GO:0043161">
    <property type="term" value="P:proteasome-mediated ubiquitin-dependent protein catabolic process"/>
    <property type="evidence" value="ECO:0000314"/>
    <property type="project" value="MGI"/>
</dbReference>
<dbReference type="GO" id="GO:0016567">
    <property type="term" value="P:protein ubiquitination"/>
    <property type="evidence" value="ECO:0007669"/>
    <property type="project" value="UniProtKB-UniPathway"/>
</dbReference>
<dbReference type="CDD" id="cd22129">
    <property type="entry name" value="F-box_FBXL22"/>
    <property type="match status" value="1"/>
</dbReference>
<dbReference type="FunFam" id="1.20.1280.50:FF:000036">
    <property type="entry name" value="F-box and leucine rich repeat protein 22"/>
    <property type="match status" value="1"/>
</dbReference>
<dbReference type="Gene3D" id="1.20.1280.50">
    <property type="match status" value="1"/>
</dbReference>
<dbReference type="InterPro" id="IPR036047">
    <property type="entry name" value="F-box-like_dom_sf"/>
</dbReference>
<dbReference type="InterPro" id="IPR001810">
    <property type="entry name" value="F-box_dom"/>
</dbReference>
<dbReference type="Pfam" id="PF12937">
    <property type="entry name" value="F-box-like"/>
    <property type="match status" value="1"/>
</dbReference>
<dbReference type="SUPFAM" id="SSF81383">
    <property type="entry name" value="F-box domain"/>
    <property type="match status" value="1"/>
</dbReference>